<dbReference type="EC" id="6.3.4.2" evidence="1"/>
<dbReference type="EMBL" id="AM422018">
    <property type="protein sequence ID" value="CAM11962.1"/>
    <property type="molecule type" value="Genomic_DNA"/>
</dbReference>
<dbReference type="SMR" id="B1VAI9"/>
<dbReference type="STRING" id="59748.PA0628"/>
<dbReference type="MEROPS" id="C26.964"/>
<dbReference type="KEGG" id="pal:PA0628"/>
<dbReference type="eggNOG" id="COG0504">
    <property type="taxonomic scope" value="Bacteria"/>
</dbReference>
<dbReference type="UniPathway" id="UPA00159">
    <property type="reaction ID" value="UER00277"/>
</dbReference>
<dbReference type="Proteomes" id="UP000008323">
    <property type="component" value="Chromosome"/>
</dbReference>
<dbReference type="GO" id="GO:0005829">
    <property type="term" value="C:cytosol"/>
    <property type="evidence" value="ECO:0007669"/>
    <property type="project" value="TreeGrafter"/>
</dbReference>
<dbReference type="GO" id="GO:0005524">
    <property type="term" value="F:ATP binding"/>
    <property type="evidence" value="ECO:0007669"/>
    <property type="project" value="UniProtKB-KW"/>
</dbReference>
<dbReference type="GO" id="GO:0003883">
    <property type="term" value="F:CTP synthase activity"/>
    <property type="evidence" value="ECO:0007669"/>
    <property type="project" value="UniProtKB-UniRule"/>
</dbReference>
<dbReference type="GO" id="GO:0004359">
    <property type="term" value="F:glutaminase activity"/>
    <property type="evidence" value="ECO:0007669"/>
    <property type="project" value="RHEA"/>
</dbReference>
<dbReference type="GO" id="GO:0042802">
    <property type="term" value="F:identical protein binding"/>
    <property type="evidence" value="ECO:0007669"/>
    <property type="project" value="TreeGrafter"/>
</dbReference>
<dbReference type="GO" id="GO:0046872">
    <property type="term" value="F:metal ion binding"/>
    <property type="evidence" value="ECO:0007669"/>
    <property type="project" value="UniProtKB-KW"/>
</dbReference>
<dbReference type="GO" id="GO:0044210">
    <property type="term" value="P:'de novo' CTP biosynthetic process"/>
    <property type="evidence" value="ECO:0007669"/>
    <property type="project" value="UniProtKB-UniRule"/>
</dbReference>
<dbReference type="GO" id="GO:0019856">
    <property type="term" value="P:pyrimidine nucleobase biosynthetic process"/>
    <property type="evidence" value="ECO:0007669"/>
    <property type="project" value="TreeGrafter"/>
</dbReference>
<dbReference type="CDD" id="cd03113">
    <property type="entry name" value="CTPS_N"/>
    <property type="match status" value="1"/>
</dbReference>
<dbReference type="CDD" id="cd01746">
    <property type="entry name" value="GATase1_CTP_Synthase"/>
    <property type="match status" value="1"/>
</dbReference>
<dbReference type="FunFam" id="3.40.50.300:FF:000009">
    <property type="entry name" value="CTP synthase"/>
    <property type="match status" value="1"/>
</dbReference>
<dbReference type="FunFam" id="3.40.50.880:FF:000002">
    <property type="entry name" value="CTP synthase"/>
    <property type="match status" value="1"/>
</dbReference>
<dbReference type="Gene3D" id="3.40.50.880">
    <property type="match status" value="1"/>
</dbReference>
<dbReference type="Gene3D" id="3.40.50.300">
    <property type="entry name" value="P-loop containing nucleotide triphosphate hydrolases"/>
    <property type="match status" value="1"/>
</dbReference>
<dbReference type="HAMAP" id="MF_01227">
    <property type="entry name" value="PyrG"/>
    <property type="match status" value="1"/>
</dbReference>
<dbReference type="InterPro" id="IPR029062">
    <property type="entry name" value="Class_I_gatase-like"/>
</dbReference>
<dbReference type="InterPro" id="IPR004468">
    <property type="entry name" value="CTP_synthase"/>
</dbReference>
<dbReference type="InterPro" id="IPR017456">
    <property type="entry name" value="CTP_synthase_N"/>
</dbReference>
<dbReference type="InterPro" id="IPR017926">
    <property type="entry name" value="GATASE"/>
</dbReference>
<dbReference type="InterPro" id="IPR033828">
    <property type="entry name" value="GATase1_CTP_Synthase"/>
</dbReference>
<dbReference type="InterPro" id="IPR027417">
    <property type="entry name" value="P-loop_NTPase"/>
</dbReference>
<dbReference type="NCBIfam" id="NF003792">
    <property type="entry name" value="PRK05380.1"/>
    <property type="match status" value="1"/>
</dbReference>
<dbReference type="NCBIfam" id="TIGR00337">
    <property type="entry name" value="PyrG"/>
    <property type="match status" value="1"/>
</dbReference>
<dbReference type="PANTHER" id="PTHR11550">
    <property type="entry name" value="CTP SYNTHASE"/>
    <property type="match status" value="1"/>
</dbReference>
<dbReference type="PANTHER" id="PTHR11550:SF0">
    <property type="entry name" value="CTP SYNTHASE-RELATED"/>
    <property type="match status" value="1"/>
</dbReference>
<dbReference type="Pfam" id="PF06418">
    <property type="entry name" value="CTP_synth_N"/>
    <property type="match status" value="1"/>
</dbReference>
<dbReference type="Pfam" id="PF00117">
    <property type="entry name" value="GATase"/>
    <property type="match status" value="1"/>
</dbReference>
<dbReference type="SUPFAM" id="SSF52317">
    <property type="entry name" value="Class I glutamine amidotransferase-like"/>
    <property type="match status" value="1"/>
</dbReference>
<dbReference type="SUPFAM" id="SSF52540">
    <property type="entry name" value="P-loop containing nucleoside triphosphate hydrolases"/>
    <property type="match status" value="1"/>
</dbReference>
<dbReference type="PROSITE" id="PS51273">
    <property type="entry name" value="GATASE_TYPE_1"/>
    <property type="match status" value="1"/>
</dbReference>
<accession>B1VAI9</accession>
<sequence length="547" mass="62164">MNNKKLKSKFIFITGGVVSSLGKGITAASIGNILKNRGFKVSIQKLDPYINIDPGTMSPYQHGEVFVTNDGAETDLDLGHYERFLDENMSKSSNITAGQIYQSVINKEREGKYLGKTVQVIPHITEEIKKKIIKAAIVHQSDIVIVEIGGTVGDIESAPFLEAIRQFRYEVGYHNVLYLHTTLVPYLKKAQEIKTKPTQHSVKELRALGIQPQILVLRSEISINKEIKNKIASLCDINPQAIFEALDVDILYQIILNLFEQRIDHFILNHFQLPNNIQIDLKDWRSLINCIQNLKEKVVIGLVGKYVILHDAYLSIVESLKHAAYYYNSDIEIKWIDSEKLNSTNVKTLLNDCDGILVPHGFGPRAIEGKILAIQYAREQKIPFFGICFGMQLAVVEYARNVLFLDGANSTEIDEKTPHPVITKKIKNSNLGGTLRLGSYRCCLQKNSKSEAIYQQTTIYERHRHRFEMNPSYVSLFEKNNDFLVSGFNPEKNLAEIIELKNHPWFMAVQFHPEFLSRPLKPHPLFKSFVEAALLKNGKNIKKSKLS</sequence>
<comment type="function">
    <text evidence="1">Catalyzes the ATP-dependent amination of UTP to CTP with either L-glutamine or ammonia as the source of nitrogen. Regulates intracellular CTP levels through interactions with the four ribonucleotide triphosphates.</text>
</comment>
<comment type="catalytic activity">
    <reaction evidence="1">
        <text>UTP + L-glutamine + ATP + H2O = CTP + L-glutamate + ADP + phosphate + 2 H(+)</text>
        <dbReference type="Rhea" id="RHEA:26426"/>
        <dbReference type="ChEBI" id="CHEBI:15377"/>
        <dbReference type="ChEBI" id="CHEBI:15378"/>
        <dbReference type="ChEBI" id="CHEBI:29985"/>
        <dbReference type="ChEBI" id="CHEBI:30616"/>
        <dbReference type="ChEBI" id="CHEBI:37563"/>
        <dbReference type="ChEBI" id="CHEBI:43474"/>
        <dbReference type="ChEBI" id="CHEBI:46398"/>
        <dbReference type="ChEBI" id="CHEBI:58359"/>
        <dbReference type="ChEBI" id="CHEBI:456216"/>
        <dbReference type="EC" id="6.3.4.2"/>
    </reaction>
</comment>
<comment type="catalytic activity">
    <reaction evidence="1">
        <text>L-glutamine + H2O = L-glutamate + NH4(+)</text>
        <dbReference type="Rhea" id="RHEA:15889"/>
        <dbReference type="ChEBI" id="CHEBI:15377"/>
        <dbReference type="ChEBI" id="CHEBI:28938"/>
        <dbReference type="ChEBI" id="CHEBI:29985"/>
        <dbReference type="ChEBI" id="CHEBI:58359"/>
    </reaction>
</comment>
<comment type="catalytic activity">
    <reaction evidence="1">
        <text>UTP + NH4(+) + ATP = CTP + ADP + phosphate + 2 H(+)</text>
        <dbReference type="Rhea" id="RHEA:16597"/>
        <dbReference type="ChEBI" id="CHEBI:15378"/>
        <dbReference type="ChEBI" id="CHEBI:28938"/>
        <dbReference type="ChEBI" id="CHEBI:30616"/>
        <dbReference type="ChEBI" id="CHEBI:37563"/>
        <dbReference type="ChEBI" id="CHEBI:43474"/>
        <dbReference type="ChEBI" id="CHEBI:46398"/>
        <dbReference type="ChEBI" id="CHEBI:456216"/>
    </reaction>
</comment>
<comment type="activity regulation">
    <text evidence="1">Allosterically activated by GTP, when glutamine is the substrate; GTP has no effect on the reaction when ammonia is the substrate. The allosteric effector GTP functions by stabilizing the protein conformation that binds the tetrahedral intermediate(s) formed during glutamine hydrolysis. Inhibited by the product CTP, via allosteric rather than competitive inhibition.</text>
</comment>
<comment type="pathway">
    <text evidence="1">Pyrimidine metabolism; CTP biosynthesis via de novo pathway; CTP from UDP: step 2/2.</text>
</comment>
<comment type="subunit">
    <text evidence="1">Homotetramer.</text>
</comment>
<comment type="miscellaneous">
    <text evidence="1">CTPSs have evolved a hybrid strategy for distinguishing between UTP and CTP. The overlapping regions of the product feedback inhibitory and substrate sites recognize a common feature in both compounds, the triphosphate moiety. To differentiate isosteric substrate and product pyrimidine rings, an additional pocket far from the expected kinase/ligase catalytic site, specifically recognizes the cytosine and ribose portions of the product inhibitor.</text>
</comment>
<comment type="similarity">
    <text evidence="1">Belongs to the CTP synthase family.</text>
</comment>
<proteinExistence type="inferred from homology"/>
<name>PYRG_PHYAS</name>
<protein>
    <recommendedName>
        <fullName evidence="1">CTP synthase</fullName>
        <ecNumber evidence="1">6.3.4.2</ecNumber>
    </recommendedName>
    <alternativeName>
        <fullName evidence="1">Cytidine 5'-triphosphate synthase</fullName>
    </alternativeName>
    <alternativeName>
        <fullName evidence="1">Cytidine triphosphate synthetase</fullName>
        <shortName evidence="1">CTP synthetase</shortName>
        <shortName evidence="1">CTPS</shortName>
    </alternativeName>
    <alternativeName>
        <fullName evidence="1">UTP--ammonia ligase</fullName>
    </alternativeName>
</protein>
<evidence type="ECO:0000255" key="1">
    <source>
        <dbReference type="HAMAP-Rule" id="MF_01227"/>
    </source>
</evidence>
<gene>
    <name evidence="1" type="primary">pyrG</name>
    <name type="ordered locus">PA0628</name>
</gene>
<organism>
    <name type="scientific">Phytoplasma australiense</name>
    <dbReference type="NCBI Taxonomy" id="59748"/>
    <lineage>
        <taxon>Bacteria</taxon>
        <taxon>Bacillati</taxon>
        <taxon>Mycoplasmatota</taxon>
        <taxon>Mollicutes</taxon>
        <taxon>Acholeplasmatales</taxon>
        <taxon>Acholeplasmataceae</taxon>
        <taxon>Candidatus Phytoplasma</taxon>
        <taxon>16SrXII (Stolbur group)</taxon>
    </lineage>
</organism>
<feature type="chain" id="PRO_1000139515" description="CTP synthase">
    <location>
        <begin position="1"/>
        <end position="547"/>
    </location>
</feature>
<feature type="domain" description="Glutamine amidotransferase type-1" evidence="1">
    <location>
        <begin position="306"/>
        <end position="539"/>
    </location>
</feature>
<feature type="region of interest" description="Amidoligase domain" evidence="1">
    <location>
        <begin position="1"/>
        <end position="273"/>
    </location>
</feature>
<feature type="active site" description="Nucleophile; for glutamine hydrolysis" evidence="1">
    <location>
        <position position="388"/>
    </location>
</feature>
<feature type="active site" evidence="1">
    <location>
        <position position="512"/>
    </location>
</feature>
<feature type="active site" evidence="1">
    <location>
        <position position="514"/>
    </location>
</feature>
<feature type="binding site" evidence="1">
    <location>
        <position position="19"/>
    </location>
    <ligand>
        <name>CTP</name>
        <dbReference type="ChEBI" id="CHEBI:37563"/>
        <note>allosteric inhibitor</note>
    </ligand>
</feature>
<feature type="binding site" evidence="1">
    <location>
        <position position="19"/>
    </location>
    <ligand>
        <name>UTP</name>
        <dbReference type="ChEBI" id="CHEBI:46398"/>
    </ligand>
</feature>
<feature type="binding site" evidence="1">
    <location>
        <begin position="20"/>
        <end position="25"/>
    </location>
    <ligand>
        <name>ATP</name>
        <dbReference type="ChEBI" id="CHEBI:30616"/>
    </ligand>
</feature>
<feature type="binding site" evidence="1">
    <location>
        <position position="60"/>
    </location>
    <ligand>
        <name>L-glutamine</name>
        <dbReference type="ChEBI" id="CHEBI:58359"/>
    </ligand>
</feature>
<feature type="binding site" evidence="1">
    <location>
        <position position="77"/>
    </location>
    <ligand>
        <name>ATP</name>
        <dbReference type="ChEBI" id="CHEBI:30616"/>
    </ligand>
</feature>
<feature type="binding site" evidence="1">
    <location>
        <position position="77"/>
    </location>
    <ligand>
        <name>Mg(2+)</name>
        <dbReference type="ChEBI" id="CHEBI:18420"/>
    </ligand>
</feature>
<feature type="binding site" evidence="1">
    <location>
        <position position="147"/>
    </location>
    <ligand>
        <name>Mg(2+)</name>
        <dbReference type="ChEBI" id="CHEBI:18420"/>
    </ligand>
</feature>
<feature type="binding site" evidence="1">
    <location>
        <begin position="154"/>
        <end position="156"/>
    </location>
    <ligand>
        <name>CTP</name>
        <dbReference type="ChEBI" id="CHEBI:37563"/>
        <note>allosteric inhibitor</note>
    </ligand>
</feature>
<feature type="binding site" evidence="1">
    <location>
        <begin position="194"/>
        <end position="199"/>
    </location>
    <ligand>
        <name>CTP</name>
        <dbReference type="ChEBI" id="CHEBI:37563"/>
        <note>allosteric inhibitor</note>
    </ligand>
</feature>
<feature type="binding site" evidence="1">
    <location>
        <begin position="194"/>
        <end position="199"/>
    </location>
    <ligand>
        <name>UTP</name>
        <dbReference type="ChEBI" id="CHEBI:46398"/>
    </ligand>
</feature>
<feature type="binding site" evidence="1">
    <location>
        <position position="230"/>
    </location>
    <ligand>
        <name>CTP</name>
        <dbReference type="ChEBI" id="CHEBI:37563"/>
        <note>allosteric inhibitor</note>
    </ligand>
</feature>
<feature type="binding site" evidence="1">
    <location>
        <position position="230"/>
    </location>
    <ligand>
        <name>UTP</name>
        <dbReference type="ChEBI" id="CHEBI:46398"/>
    </ligand>
</feature>
<feature type="binding site" evidence="1">
    <location>
        <position position="361"/>
    </location>
    <ligand>
        <name>L-glutamine</name>
        <dbReference type="ChEBI" id="CHEBI:58359"/>
    </ligand>
</feature>
<feature type="binding site" evidence="1">
    <location>
        <begin position="389"/>
        <end position="392"/>
    </location>
    <ligand>
        <name>L-glutamine</name>
        <dbReference type="ChEBI" id="CHEBI:58359"/>
    </ligand>
</feature>
<feature type="binding site" evidence="1">
    <location>
        <position position="412"/>
    </location>
    <ligand>
        <name>L-glutamine</name>
        <dbReference type="ChEBI" id="CHEBI:58359"/>
    </ligand>
</feature>
<feature type="binding site" evidence="1">
    <location>
        <position position="466"/>
    </location>
    <ligand>
        <name>L-glutamine</name>
        <dbReference type="ChEBI" id="CHEBI:58359"/>
    </ligand>
</feature>
<reference key="1">
    <citation type="journal article" date="2008" name="J. Bacteriol.">
        <title>Comparative genome analysis of 'Candidatus Phytoplasma australiense' (subgroup tuf-Australia I; rp-A) and 'Ca. Phytoplasma asteris' strains OY-M and AY-WB.</title>
        <authorList>
            <person name="Tran-Nguyen L.T."/>
            <person name="Kube M."/>
            <person name="Schneider B."/>
            <person name="Reinhardt R."/>
            <person name="Gibb K.S."/>
        </authorList>
    </citation>
    <scope>NUCLEOTIDE SEQUENCE [LARGE SCALE GENOMIC DNA]</scope>
</reference>
<keyword id="KW-0067">ATP-binding</keyword>
<keyword id="KW-0315">Glutamine amidotransferase</keyword>
<keyword id="KW-0436">Ligase</keyword>
<keyword id="KW-0460">Magnesium</keyword>
<keyword id="KW-0479">Metal-binding</keyword>
<keyword id="KW-0547">Nucleotide-binding</keyword>
<keyword id="KW-0665">Pyrimidine biosynthesis</keyword>
<keyword id="KW-1185">Reference proteome</keyword>